<gene>
    <name type="primary">rpl33</name>
</gene>
<name>RK33_TRICV</name>
<dbReference type="EMBL" id="Z67753">
    <property type="protein sequence ID" value="CAA91742.1"/>
    <property type="molecule type" value="Genomic_DNA"/>
</dbReference>
<dbReference type="PIR" id="S78369">
    <property type="entry name" value="S78369"/>
</dbReference>
<dbReference type="RefSeq" id="NP_043710.1">
    <property type="nucleotide sequence ID" value="NC_001713.1"/>
</dbReference>
<dbReference type="SMR" id="P49565"/>
<dbReference type="GeneID" id="801765"/>
<dbReference type="GO" id="GO:0009507">
    <property type="term" value="C:chloroplast"/>
    <property type="evidence" value="ECO:0007669"/>
    <property type="project" value="UniProtKB-SubCell"/>
</dbReference>
<dbReference type="GO" id="GO:1990904">
    <property type="term" value="C:ribonucleoprotein complex"/>
    <property type="evidence" value="ECO:0007669"/>
    <property type="project" value="UniProtKB-KW"/>
</dbReference>
<dbReference type="GO" id="GO:0005840">
    <property type="term" value="C:ribosome"/>
    <property type="evidence" value="ECO:0007669"/>
    <property type="project" value="UniProtKB-KW"/>
</dbReference>
<dbReference type="GO" id="GO:0003735">
    <property type="term" value="F:structural constituent of ribosome"/>
    <property type="evidence" value="ECO:0007669"/>
    <property type="project" value="InterPro"/>
</dbReference>
<dbReference type="GO" id="GO:0006412">
    <property type="term" value="P:translation"/>
    <property type="evidence" value="ECO:0007669"/>
    <property type="project" value="UniProtKB-UniRule"/>
</dbReference>
<dbReference type="Gene3D" id="2.20.28.120">
    <property type="entry name" value="Ribosomal protein L33"/>
    <property type="match status" value="1"/>
</dbReference>
<dbReference type="HAMAP" id="MF_00294">
    <property type="entry name" value="Ribosomal_bL33"/>
    <property type="match status" value="1"/>
</dbReference>
<dbReference type="InterPro" id="IPR001705">
    <property type="entry name" value="Ribosomal_bL33"/>
</dbReference>
<dbReference type="InterPro" id="IPR018264">
    <property type="entry name" value="Ribosomal_bL33_CS"/>
</dbReference>
<dbReference type="InterPro" id="IPR038584">
    <property type="entry name" value="Ribosomal_bL33_sf"/>
</dbReference>
<dbReference type="InterPro" id="IPR011332">
    <property type="entry name" value="Ribosomal_zn-bd"/>
</dbReference>
<dbReference type="NCBIfam" id="NF001764">
    <property type="entry name" value="PRK00504.1"/>
    <property type="match status" value="1"/>
</dbReference>
<dbReference type="NCBIfam" id="NF001860">
    <property type="entry name" value="PRK00595.1"/>
    <property type="match status" value="1"/>
</dbReference>
<dbReference type="NCBIfam" id="TIGR01023">
    <property type="entry name" value="rpmG_bact"/>
    <property type="match status" value="1"/>
</dbReference>
<dbReference type="PANTHER" id="PTHR43168">
    <property type="entry name" value="50S RIBOSOMAL PROTEIN L33, CHLOROPLASTIC"/>
    <property type="match status" value="1"/>
</dbReference>
<dbReference type="PANTHER" id="PTHR43168:SF2">
    <property type="entry name" value="LARGE RIBOSOMAL SUBUNIT PROTEIN BL33C"/>
    <property type="match status" value="1"/>
</dbReference>
<dbReference type="Pfam" id="PF00471">
    <property type="entry name" value="Ribosomal_L33"/>
    <property type="match status" value="1"/>
</dbReference>
<dbReference type="SUPFAM" id="SSF57829">
    <property type="entry name" value="Zn-binding ribosomal proteins"/>
    <property type="match status" value="1"/>
</dbReference>
<dbReference type="PROSITE" id="PS00582">
    <property type="entry name" value="RIBOSOMAL_L33"/>
    <property type="match status" value="1"/>
</dbReference>
<evidence type="ECO:0000305" key="1"/>
<protein>
    <recommendedName>
        <fullName evidence="1">Large ribosomal subunit protein bL33c</fullName>
    </recommendedName>
    <alternativeName>
        <fullName>50S ribosomal protein L33, chloroplastic</fullName>
    </alternativeName>
</protein>
<geneLocation type="chloroplast"/>
<keyword id="KW-0150">Chloroplast</keyword>
<keyword id="KW-0934">Plastid</keyword>
<keyword id="KW-0687">Ribonucleoprotein</keyword>
<keyword id="KW-0689">Ribosomal protein</keyword>
<sequence>MGKAKGIRILITLECTECRSNTNKRSNGVSRYTTQKNRRNNPERIELKKYCPHCNKSTIHKEIK</sequence>
<accession>P49565</accession>
<feature type="chain" id="PRO_0000170290" description="Large ribosomal subunit protein bL33c">
    <location>
        <begin position="1"/>
        <end position="64"/>
    </location>
</feature>
<organism>
    <name type="scientific">Trieres chinensis</name>
    <name type="common">Marine centric diatom</name>
    <name type="synonym">Odontella sinensis</name>
    <dbReference type="NCBI Taxonomy" id="1514140"/>
    <lineage>
        <taxon>Eukaryota</taxon>
        <taxon>Sar</taxon>
        <taxon>Stramenopiles</taxon>
        <taxon>Ochrophyta</taxon>
        <taxon>Bacillariophyta</taxon>
        <taxon>Mediophyceae</taxon>
        <taxon>Biddulphiophycidae</taxon>
        <taxon>Eupodiscales</taxon>
        <taxon>Parodontellaceae</taxon>
        <taxon>Trieres</taxon>
    </lineage>
</organism>
<comment type="subcellular location">
    <subcellularLocation>
        <location>Plastid</location>
        <location>Chloroplast</location>
    </subcellularLocation>
</comment>
<comment type="similarity">
    <text evidence="1">Belongs to the bacterial ribosomal protein bL33 family.</text>
</comment>
<reference key="1">
    <citation type="journal article" date="1995" name="Plant Mol. Biol. Rep.">
        <title>The chloroplast genome of a chlorophyll a+c-containing alga, Odontella sinensis.</title>
        <authorList>
            <person name="Kowallik K.V."/>
            <person name="Stoebe B."/>
            <person name="Schaffran I."/>
            <person name="Kroth-Pancic P."/>
            <person name="Freier U."/>
        </authorList>
    </citation>
    <scope>NUCLEOTIDE SEQUENCE [LARGE SCALE GENOMIC DNA]</scope>
</reference>
<proteinExistence type="inferred from homology"/>